<evidence type="ECO:0000250" key="1">
    <source>
        <dbReference type="UniProtKB" id="P0AE52"/>
    </source>
</evidence>
<evidence type="ECO:0000255" key="2">
    <source>
        <dbReference type="PROSITE-ProRule" id="PRU00691"/>
    </source>
</evidence>
<evidence type="ECO:0000305" key="3"/>
<sequence length="157" mass="18109">MTIEIGQKAPDLELKGDHGETVKLSDYKGKYIVLYFYPKDMTPGCTTEACDFRDSHESFAELDAVIIGVSPDSQEKHGKFKEKHNLPFLLLVDDEHKLAEAFDVWKLKKNFGKEYMGIERSTFLIDKEGRLIKEWRKVKVKDHVAEALQTLKDMSEK</sequence>
<proteinExistence type="inferred from homology"/>
<gene>
    <name type="primary">ygaF</name>
    <name type="synonym">bcp</name>
    <name type="ordered locus">BSU08720</name>
</gene>
<feature type="chain" id="PRO_0000360509" description="Peroxiredoxin Bcp">
    <location>
        <begin position="1"/>
        <end position="157"/>
    </location>
</feature>
<feature type="domain" description="Thioredoxin" evidence="2">
    <location>
        <begin position="3"/>
        <end position="156"/>
    </location>
</feature>
<feature type="active site" description="Cysteine sulfenic acid (-SOH) intermediate" evidence="1">
    <location>
        <position position="45"/>
    </location>
</feature>
<feature type="disulfide bond" description="Redox-active" evidence="1">
    <location>
        <begin position="45"/>
        <end position="50"/>
    </location>
</feature>
<dbReference type="EC" id="1.11.1.24" evidence="1"/>
<dbReference type="EMBL" id="AL009126">
    <property type="protein sequence ID" value="CAB12700.2"/>
    <property type="molecule type" value="Genomic_DNA"/>
</dbReference>
<dbReference type="RefSeq" id="WP_003233532.1">
    <property type="nucleotide sequence ID" value="NZ_OZ025638.1"/>
</dbReference>
<dbReference type="RefSeq" id="YP_054574.1">
    <property type="nucleotide sequence ID" value="NC_000964.3"/>
</dbReference>
<dbReference type="SMR" id="Q796Y8"/>
<dbReference type="FunCoup" id="Q796Y8">
    <property type="interactions" value="576"/>
</dbReference>
<dbReference type="STRING" id="224308.BSU08720"/>
<dbReference type="PeroxiBase" id="4400">
    <property type="entry name" value="BsBCP"/>
</dbReference>
<dbReference type="jPOST" id="Q796Y8"/>
<dbReference type="PaxDb" id="224308-BSU08720"/>
<dbReference type="EnsemblBacteria" id="CAB12700">
    <property type="protein sequence ID" value="CAB12700"/>
    <property type="gene ID" value="BSU_08720"/>
</dbReference>
<dbReference type="GeneID" id="2914207"/>
<dbReference type="KEGG" id="bsu:BSU08720"/>
<dbReference type="PATRIC" id="fig|224308.179.peg.940"/>
<dbReference type="eggNOG" id="COG1225">
    <property type="taxonomic scope" value="Bacteria"/>
</dbReference>
<dbReference type="InParanoid" id="Q796Y8"/>
<dbReference type="OrthoDB" id="9812811at2"/>
<dbReference type="PhylomeDB" id="Q796Y8"/>
<dbReference type="BioCyc" id="BSUB:BSU08720-MONOMER"/>
<dbReference type="Proteomes" id="UP000001570">
    <property type="component" value="Chromosome"/>
</dbReference>
<dbReference type="GO" id="GO:0005737">
    <property type="term" value="C:cytoplasm"/>
    <property type="evidence" value="ECO:0000318"/>
    <property type="project" value="GO_Central"/>
</dbReference>
<dbReference type="GO" id="GO:0008379">
    <property type="term" value="F:thioredoxin peroxidase activity"/>
    <property type="evidence" value="ECO:0000318"/>
    <property type="project" value="GO_Central"/>
</dbReference>
<dbReference type="GO" id="GO:0045454">
    <property type="term" value="P:cell redox homeostasis"/>
    <property type="evidence" value="ECO:0000318"/>
    <property type="project" value="GO_Central"/>
</dbReference>
<dbReference type="GO" id="GO:0034599">
    <property type="term" value="P:cellular response to oxidative stress"/>
    <property type="evidence" value="ECO:0000318"/>
    <property type="project" value="GO_Central"/>
</dbReference>
<dbReference type="CDD" id="cd03017">
    <property type="entry name" value="PRX_BCP"/>
    <property type="match status" value="1"/>
</dbReference>
<dbReference type="FunFam" id="3.40.30.10:FF:000007">
    <property type="entry name" value="Thioredoxin-dependent thiol peroxidase"/>
    <property type="match status" value="1"/>
</dbReference>
<dbReference type="Gene3D" id="3.40.30.10">
    <property type="entry name" value="Glutaredoxin"/>
    <property type="match status" value="1"/>
</dbReference>
<dbReference type="InterPro" id="IPR000866">
    <property type="entry name" value="AhpC/TSA"/>
</dbReference>
<dbReference type="InterPro" id="IPR024706">
    <property type="entry name" value="Peroxiredoxin_AhpC-typ"/>
</dbReference>
<dbReference type="InterPro" id="IPR050924">
    <property type="entry name" value="Peroxiredoxin_BCP/PrxQ"/>
</dbReference>
<dbReference type="InterPro" id="IPR036249">
    <property type="entry name" value="Thioredoxin-like_sf"/>
</dbReference>
<dbReference type="InterPro" id="IPR013766">
    <property type="entry name" value="Thioredoxin_domain"/>
</dbReference>
<dbReference type="NCBIfam" id="NF006960">
    <property type="entry name" value="PRK09437.1"/>
    <property type="match status" value="1"/>
</dbReference>
<dbReference type="PANTHER" id="PTHR42801:SF4">
    <property type="entry name" value="AHPC_TSA FAMILY PROTEIN"/>
    <property type="match status" value="1"/>
</dbReference>
<dbReference type="PANTHER" id="PTHR42801">
    <property type="entry name" value="THIOREDOXIN-DEPENDENT PEROXIDE REDUCTASE"/>
    <property type="match status" value="1"/>
</dbReference>
<dbReference type="Pfam" id="PF00578">
    <property type="entry name" value="AhpC-TSA"/>
    <property type="match status" value="1"/>
</dbReference>
<dbReference type="PIRSF" id="PIRSF000239">
    <property type="entry name" value="AHPC"/>
    <property type="match status" value="1"/>
</dbReference>
<dbReference type="SUPFAM" id="SSF52833">
    <property type="entry name" value="Thioredoxin-like"/>
    <property type="match status" value="1"/>
</dbReference>
<dbReference type="PROSITE" id="PS51352">
    <property type="entry name" value="THIOREDOXIN_2"/>
    <property type="match status" value="1"/>
</dbReference>
<name>BCP_BACSU</name>
<accession>Q796Y8</accession>
<reference key="1">
    <citation type="journal article" date="1997" name="Nature">
        <title>The complete genome sequence of the Gram-positive bacterium Bacillus subtilis.</title>
        <authorList>
            <person name="Kunst F."/>
            <person name="Ogasawara N."/>
            <person name="Moszer I."/>
            <person name="Albertini A.M."/>
            <person name="Alloni G."/>
            <person name="Azevedo V."/>
            <person name="Bertero M.G."/>
            <person name="Bessieres P."/>
            <person name="Bolotin A."/>
            <person name="Borchert S."/>
            <person name="Borriss R."/>
            <person name="Boursier L."/>
            <person name="Brans A."/>
            <person name="Braun M."/>
            <person name="Brignell S.C."/>
            <person name="Bron S."/>
            <person name="Brouillet S."/>
            <person name="Bruschi C.V."/>
            <person name="Caldwell B."/>
            <person name="Capuano V."/>
            <person name="Carter N.M."/>
            <person name="Choi S.-K."/>
            <person name="Codani J.-J."/>
            <person name="Connerton I.F."/>
            <person name="Cummings N.J."/>
            <person name="Daniel R.A."/>
            <person name="Denizot F."/>
            <person name="Devine K.M."/>
            <person name="Duesterhoeft A."/>
            <person name="Ehrlich S.D."/>
            <person name="Emmerson P.T."/>
            <person name="Entian K.-D."/>
            <person name="Errington J."/>
            <person name="Fabret C."/>
            <person name="Ferrari E."/>
            <person name="Foulger D."/>
            <person name="Fritz C."/>
            <person name="Fujita M."/>
            <person name="Fujita Y."/>
            <person name="Fuma S."/>
            <person name="Galizzi A."/>
            <person name="Galleron N."/>
            <person name="Ghim S.-Y."/>
            <person name="Glaser P."/>
            <person name="Goffeau A."/>
            <person name="Golightly E.J."/>
            <person name="Grandi G."/>
            <person name="Guiseppi G."/>
            <person name="Guy B.J."/>
            <person name="Haga K."/>
            <person name="Haiech J."/>
            <person name="Harwood C.R."/>
            <person name="Henaut A."/>
            <person name="Hilbert H."/>
            <person name="Holsappel S."/>
            <person name="Hosono S."/>
            <person name="Hullo M.-F."/>
            <person name="Itaya M."/>
            <person name="Jones L.-M."/>
            <person name="Joris B."/>
            <person name="Karamata D."/>
            <person name="Kasahara Y."/>
            <person name="Klaerr-Blanchard M."/>
            <person name="Klein C."/>
            <person name="Kobayashi Y."/>
            <person name="Koetter P."/>
            <person name="Koningstein G."/>
            <person name="Krogh S."/>
            <person name="Kumano M."/>
            <person name="Kurita K."/>
            <person name="Lapidus A."/>
            <person name="Lardinois S."/>
            <person name="Lauber J."/>
            <person name="Lazarevic V."/>
            <person name="Lee S.-M."/>
            <person name="Levine A."/>
            <person name="Liu H."/>
            <person name="Masuda S."/>
            <person name="Mauel C."/>
            <person name="Medigue C."/>
            <person name="Medina N."/>
            <person name="Mellado R.P."/>
            <person name="Mizuno M."/>
            <person name="Moestl D."/>
            <person name="Nakai S."/>
            <person name="Noback M."/>
            <person name="Noone D."/>
            <person name="O'Reilly M."/>
            <person name="Ogawa K."/>
            <person name="Ogiwara A."/>
            <person name="Oudega B."/>
            <person name="Park S.-H."/>
            <person name="Parro V."/>
            <person name="Pohl T.M."/>
            <person name="Portetelle D."/>
            <person name="Porwollik S."/>
            <person name="Prescott A.M."/>
            <person name="Presecan E."/>
            <person name="Pujic P."/>
            <person name="Purnelle B."/>
            <person name="Rapoport G."/>
            <person name="Rey M."/>
            <person name="Reynolds S."/>
            <person name="Rieger M."/>
            <person name="Rivolta C."/>
            <person name="Rocha E."/>
            <person name="Roche B."/>
            <person name="Rose M."/>
            <person name="Sadaie Y."/>
            <person name="Sato T."/>
            <person name="Scanlan E."/>
            <person name="Schleich S."/>
            <person name="Schroeter R."/>
            <person name="Scoffone F."/>
            <person name="Sekiguchi J."/>
            <person name="Sekowska A."/>
            <person name="Seror S.J."/>
            <person name="Serror P."/>
            <person name="Shin B.-S."/>
            <person name="Soldo B."/>
            <person name="Sorokin A."/>
            <person name="Tacconi E."/>
            <person name="Takagi T."/>
            <person name="Takahashi H."/>
            <person name="Takemaru K."/>
            <person name="Takeuchi M."/>
            <person name="Tamakoshi A."/>
            <person name="Tanaka T."/>
            <person name="Terpstra P."/>
            <person name="Tognoni A."/>
            <person name="Tosato V."/>
            <person name="Uchiyama S."/>
            <person name="Vandenbol M."/>
            <person name="Vannier F."/>
            <person name="Vassarotti A."/>
            <person name="Viari A."/>
            <person name="Wambutt R."/>
            <person name="Wedler E."/>
            <person name="Wedler H."/>
            <person name="Weitzenegger T."/>
            <person name="Winters P."/>
            <person name="Wipat A."/>
            <person name="Yamamoto H."/>
            <person name="Yamane K."/>
            <person name="Yasumoto K."/>
            <person name="Yata K."/>
            <person name="Yoshida K."/>
            <person name="Yoshikawa H.-F."/>
            <person name="Zumstein E."/>
            <person name="Yoshikawa H."/>
            <person name="Danchin A."/>
        </authorList>
    </citation>
    <scope>NUCLEOTIDE SEQUENCE [LARGE SCALE GENOMIC DNA]</scope>
    <source>
        <strain>168</strain>
    </source>
</reference>
<protein>
    <recommendedName>
        <fullName>Peroxiredoxin Bcp</fullName>
        <ecNumber evidence="1">1.11.1.24</ecNumber>
    </recommendedName>
    <alternativeName>
        <fullName>Bacterioferritin comigratory protein</fullName>
    </alternativeName>
    <alternativeName>
        <fullName>Thioredoxin peroxidase</fullName>
    </alternativeName>
    <alternativeName>
        <fullName evidence="3">Thioredoxin-dependent peroxiredoxin Bcp</fullName>
    </alternativeName>
</protein>
<keyword id="KW-0049">Antioxidant</keyword>
<keyword id="KW-1015">Disulfide bond</keyword>
<keyword id="KW-0560">Oxidoreductase</keyword>
<keyword id="KW-0575">Peroxidase</keyword>
<keyword id="KW-0676">Redox-active center</keyword>
<keyword id="KW-1185">Reference proteome</keyword>
<organism>
    <name type="scientific">Bacillus subtilis (strain 168)</name>
    <dbReference type="NCBI Taxonomy" id="224308"/>
    <lineage>
        <taxon>Bacteria</taxon>
        <taxon>Bacillati</taxon>
        <taxon>Bacillota</taxon>
        <taxon>Bacilli</taxon>
        <taxon>Bacillales</taxon>
        <taxon>Bacillaceae</taxon>
        <taxon>Bacillus</taxon>
    </lineage>
</organism>
<comment type="function">
    <text evidence="1">Thiol-specific peroxidase that catalyzes the reduction of hydrogen peroxide and organic hydroperoxides to water and alcohols, respectively. Plays a role in cell protection against oxidative stress by detoxifying peroxides and as sensor of hydrogen peroxide-mediated signaling events.</text>
</comment>
<comment type="catalytic activity">
    <reaction evidence="1">
        <text>a hydroperoxide + [thioredoxin]-dithiol = an alcohol + [thioredoxin]-disulfide + H2O</text>
        <dbReference type="Rhea" id="RHEA:62620"/>
        <dbReference type="Rhea" id="RHEA-COMP:10698"/>
        <dbReference type="Rhea" id="RHEA-COMP:10700"/>
        <dbReference type="ChEBI" id="CHEBI:15377"/>
        <dbReference type="ChEBI" id="CHEBI:29950"/>
        <dbReference type="ChEBI" id="CHEBI:30879"/>
        <dbReference type="ChEBI" id="CHEBI:35924"/>
        <dbReference type="ChEBI" id="CHEBI:50058"/>
        <dbReference type="EC" id="1.11.1.24"/>
    </reaction>
</comment>
<comment type="subunit">
    <text evidence="1">Monomer.</text>
</comment>
<comment type="miscellaneous">
    <text evidence="1">The active site is a conserved redox-active cysteine residue, the peroxidatic cysteine (C(P)), which makes the nucleophilic attack on the peroxide substrate. The peroxide oxidizes the C(P)-SH to cysteine sulfenic acid (C(P)-SOH), which then reacts with another cysteine residue, the resolving cysteine (C(R)), to form a disulfide bridge. The disulfide is subsequently reduced by an appropriate electron donor to complete the catalytic cycle. In this atypical 2-Cys peroxiredoxin, C(R) is present in the same subunit to form an intramolecular disulfide. The disulfide is subsequently reduced by thioredoxin.</text>
</comment>
<comment type="similarity">
    <text evidence="3">Belongs to the peroxiredoxin family. BCP/PrxQ subfamily.</text>
</comment>